<reference key="1">
    <citation type="journal article" date="2005" name="Nucleic Acids Res.">
        <title>Genome dynamics and diversity of Shigella species, the etiologic agents of bacillary dysentery.</title>
        <authorList>
            <person name="Yang F."/>
            <person name="Yang J."/>
            <person name="Zhang X."/>
            <person name="Chen L."/>
            <person name="Jiang Y."/>
            <person name="Yan Y."/>
            <person name="Tang X."/>
            <person name="Wang J."/>
            <person name="Xiong Z."/>
            <person name="Dong J."/>
            <person name="Xue Y."/>
            <person name="Zhu Y."/>
            <person name="Xu X."/>
            <person name="Sun L."/>
            <person name="Chen S."/>
            <person name="Nie H."/>
            <person name="Peng J."/>
            <person name="Xu J."/>
            <person name="Wang Y."/>
            <person name="Yuan Z."/>
            <person name="Wen Y."/>
            <person name="Yao Z."/>
            <person name="Shen Y."/>
            <person name="Qiang B."/>
            <person name="Hou Y."/>
            <person name="Yu J."/>
            <person name="Jin Q."/>
        </authorList>
    </citation>
    <scope>NUCLEOTIDE SEQUENCE [LARGE SCALE GENOMIC DNA]</scope>
    <source>
        <strain>Sb227</strain>
    </source>
</reference>
<proteinExistence type="inferred from homology"/>
<comment type="function">
    <text evidence="1">Although this protein associates with the 30S subunit of the ribosome it is not considered to be a bona fide ribosomal protein.</text>
</comment>
<comment type="subunit">
    <text evidence="1">Associates exclusively with the 30S subunit; there is 0.1 copy per ribosome in the exponential phase and 0.4 copies per ribosome in the stationary phase.</text>
</comment>
<comment type="similarity">
    <text evidence="3">Belongs to the SRA family.</text>
</comment>
<name>SRA_SHIBS</name>
<feature type="chain" id="PRO_0000287578" description="Stationary-phase-induced ribosome-associated protein">
    <location>
        <begin position="1"/>
        <end position="45"/>
    </location>
</feature>
<feature type="region of interest" description="Disordered" evidence="2">
    <location>
        <begin position="21"/>
        <end position="45"/>
    </location>
</feature>
<organism>
    <name type="scientific">Shigella boydii serotype 4 (strain Sb227)</name>
    <dbReference type="NCBI Taxonomy" id="300268"/>
    <lineage>
        <taxon>Bacteria</taxon>
        <taxon>Pseudomonadati</taxon>
        <taxon>Pseudomonadota</taxon>
        <taxon>Gammaproteobacteria</taxon>
        <taxon>Enterobacterales</taxon>
        <taxon>Enterobacteriaceae</taxon>
        <taxon>Shigella</taxon>
    </lineage>
</organism>
<sequence>MKSNRQARHILGLDHKISNQRKIVTEGDKSSVVNNPTGRKRPAEK</sequence>
<accession>Q320R9</accession>
<gene>
    <name type="primary">sra</name>
    <name type="synonym">rpsV</name>
    <name type="ordered locus">SBO_1577</name>
</gene>
<dbReference type="EMBL" id="CP000036">
    <property type="protein sequence ID" value="ABB66189.1"/>
    <property type="molecule type" value="Genomic_DNA"/>
</dbReference>
<dbReference type="RefSeq" id="WP_000841554.1">
    <property type="nucleotide sequence ID" value="NC_007613.1"/>
</dbReference>
<dbReference type="GeneID" id="93775639"/>
<dbReference type="KEGG" id="sbo:SBO_1577"/>
<dbReference type="HOGENOM" id="CLU_210948_0_0_6"/>
<dbReference type="Proteomes" id="UP000007067">
    <property type="component" value="Chromosome"/>
</dbReference>
<dbReference type="GO" id="GO:0006412">
    <property type="term" value="P:translation"/>
    <property type="evidence" value="ECO:0007669"/>
    <property type="project" value="InterPro"/>
</dbReference>
<dbReference type="InterPro" id="IPR012607">
    <property type="entry name" value="SRA-like"/>
</dbReference>
<dbReference type="NCBIfam" id="NF007473">
    <property type="entry name" value="PRK10057.1"/>
    <property type="match status" value="1"/>
</dbReference>
<dbReference type="Pfam" id="PF08136">
    <property type="entry name" value="SRA_like"/>
    <property type="match status" value="1"/>
</dbReference>
<evidence type="ECO:0000250" key="1"/>
<evidence type="ECO:0000256" key="2">
    <source>
        <dbReference type="SAM" id="MobiDB-lite"/>
    </source>
</evidence>
<evidence type="ECO:0000305" key="3"/>
<protein>
    <recommendedName>
        <fullName>Stationary-phase-induced ribosome-associated protein</fullName>
        <shortName>SRA</shortName>
    </recommendedName>
    <alternativeName>
        <fullName>30S ribosomal protein S22</fullName>
    </alternativeName>
</protein>